<organism>
    <name type="scientific">Tremblaya princeps</name>
    <dbReference type="NCBI Taxonomy" id="189385"/>
    <lineage>
        <taxon>Bacteria</taxon>
        <taxon>Pseudomonadati</taxon>
        <taxon>Pseudomonadota</taxon>
        <taxon>Betaproteobacteria</taxon>
        <taxon>Candidatus Tremblaya</taxon>
    </lineage>
</organism>
<gene>
    <name type="primary">rsmH</name>
    <name type="synonym">mraW</name>
</gene>
<reference key="1">
    <citation type="journal article" date="2002" name="Appl. Environ. Microbiol.">
        <title>The genetic properties of the primary endosymbionts of mealybugs differ from those of other endosymbionts of plant sap-sucking insects.</title>
        <authorList>
            <person name="Baumann L."/>
            <person name="Thao M.L."/>
            <person name="Hess J.M."/>
            <person name="Johnson M.W."/>
            <person name="Baumann P."/>
        </authorList>
    </citation>
    <scope>NUCLEOTIDE SEQUENCE [GENOMIC DNA]</scope>
</reference>
<accession>Q8KTR3</accession>
<protein>
    <recommendedName>
        <fullName>Ribosomal RNA small subunit methyltransferase H</fullName>
        <ecNumber>2.1.1.199</ecNumber>
    </recommendedName>
    <alternativeName>
        <fullName>16S rRNA m(4)C1402 methyltransferase</fullName>
    </alternativeName>
    <alternativeName>
        <fullName>rRNA (cytosine-N(4)-)-methyltransferase RsmH</fullName>
    </alternativeName>
</protein>
<dbReference type="EC" id="2.1.1.199"/>
<dbReference type="EMBL" id="AF481102">
    <property type="protein sequence ID" value="AAM75985.1"/>
    <property type="molecule type" value="Genomic_DNA"/>
</dbReference>
<dbReference type="SMR" id="Q8KTR3"/>
<dbReference type="GO" id="GO:0005737">
    <property type="term" value="C:cytoplasm"/>
    <property type="evidence" value="ECO:0007669"/>
    <property type="project" value="UniProtKB-SubCell"/>
</dbReference>
<dbReference type="GO" id="GO:0071424">
    <property type="term" value="F:rRNA (cytosine-N4-)-methyltransferase activity"/>
    <property type="evidence" value="ECO:0007669"/>
    <property type="project" value="TreeGrafter"/>
</dbReference>
<dbReference type="GO" id="GO:0070475">
    <property type="term" value="P:rRNA base methylation"/>
    <property type="evidence" value="ECO:0007669"/>
    <property type="project" value="TreeGrafter"/>
</dbReference>
<dbReference type="Gene3D" id="1.10.150.170">
    <property type="entry name" value="Putative methyltransferase TM0872, insert domain"/>
    <property type="match status" value="1"/>
</dbReference>
<dbReference type="Gene3D" id="3.40.50.150">
    <property type="entry name" value="Vaccinia Virus protein VP39"/>
    <property type="match status" value="1"/>
</dbReference>
<dbReference type="InterPro" id="IPR002903">
    <property type="entry name" value="RsmH"/>
</dbReference>
<dbReference type="InterPro" id="IPR023397">
    <property type="entry name" value="SAM-dep_MeTrfase_MraW_recog"/>
</dbReference>
<dbReference type="InterPro" id="IPR029063">
    <property type="entry name" value="SAM-dependent_MTases_sf"/>
</dbReference>
<dbReference type="PANTHER" id="PTHR11265:SF0">
    <property type="entry name" value="12S RRNA N4-METHYLCYTIDINE METHYLTRANSFERASE"/>
    <property type="match status" value="1"/>
</dbReference>
<dbReference type="PANTHER" id="PTHR11265">
    <property type="entry name" value="S-ADENOSYL-METHYLTRANSFERASE MRAW"/>
    <property type="match status" value="1"/>
</dbReference>
<dbReference type="Pfam" id="PF01795">
    <property type="entry name" value="Methyltransf_5"/>
    <property type="match status" value="1"/>
</dbReference>
<dbReference type="PIRSF" id="PIRSF004486">
    <property type="entry name" value="MraW"/>
    <property type="match status" value="1"/>
</dbReference>
<dbReference type="SUPFAM" id="SSF81799">
    <property type="entry name" value="Putative methyltransferase TM0872, insert domain"/>
    <property type="match status" value="1"/>
</dbReference>
<dbReference type="SUPFAM" id="SSF53335">
    <property type="entry name" value="S-adenosyl-L-methionine-dependent methyltransferases"/>
    <property type="match status" value="1"/>
</dbReference>
<evidence type="ECO:0000250" key="1"/>
<evidence type="ECO:0000305" key="2"/>
<keyword id="KW-0963">Cytoplasm</keyword>
<keyword id="KW-0489">Methyltransferase</keyword>
<keyword id="KW-0698">rRNA processing</keyword>
<keyword id="KW-0949">S-adenosyl-L-methionine</keyword>
<keyword id="KW-0808">Transferase</keyword>
<proteinExistence type="inferred from homology"/>
<name>RSMH_TREPR</name>
<feature type="chain" id="PRO_0000108601" description="Ribosomal RNA small subunit methyltransferase H">
    <location>
        <begin position="1"/>
        <end position="295"/>
    </location>
</feature>
<feature type="binding site" evidence="1">
    <location>
        <begin position="34"/>
        <end position="36"/>
    </location>
    <ligand>
        <name>S-adenosyl-L-methionine</name>
        <dbReference type="ChEBI" id="CHEBI:59789"/>
    </ligand>
</feature>
<feature type="binding site" evidence="1">
    <location>
        <position position="54"/>
    </location>
    <ligand>
        <name>S-adenosyl-L-methionine</name>
        <dbReference type="ChEBI" id="CHEBI:59789"/>
    </ligand>
</feature>
<feature type="binding site" evidence="1">
    <location>
        <position position="76"/>
    </location>
    <ligand>
        <name>S-adenosyl-L-methionine</name>
        <dbReference type="ChEBI" id="CHEBI:59789"/>
    </ligand>
</feature>
<feature type="binding site" evidence="1">
    <location>
        <position position="97"/>
    </location>
    <ligand>
        <name>S-adenosyl-L-methionine</name>
        <dbReference type="ChEBI" id="CHEBI:59789"/>
    </ligand>
</feature>
<feature type="binding site" evidence="1">
    <location>
        <position position="104"/>
    </location>
    <ligand>
        <name>S-adenosyl-L-methionine</name>
        <dbReference type="ChEBI" id="CHEBI:59789"/>
    </ligand>
</feature>
<sequence>MVRREHRSVMIQEVVDNLLTNTSGLYIDATYGTGGHSTALLGCLGPQGKVIALDCDQSIRFDHTSDPRAAAGHANFRELSGYLRCAEIYGADGIVADLGPSATQVHDAQRGLSYLHPGPIDMRVDPTLRVPLSGRLMRTGLGTLHSSLRCHGFSGRTKAAASRILHIVRKARYTTTLDVATAACGLHNQGKHMAADAFRALRSMANSEPQCLRSLVRHAPAVLKPGGRLLILTFDSFGERMVRASIEHASCLVLMRTVAPTQREVDTNPGARSSLLHVLRRTGNPRSAAPQHTRP</sequence>
<comment type="function">
    <text evidence="1">Specifically methylates the N4 position of cytidine in position 1402 (C1402) of 16S rRNA.</text>
</comment>
<comment type="catalytic activity">
    <reaction>
        <text>cytidine(1402) in 16S rRNA + S-adenosyl-L-methionine = N(4)-methylcytidine(1402) in 16S rRNA + S-adenosyl-L-homocysteine + H(+)</text>
        <dbReference type="Rhea" id="RHEA:42928"/>
        <dbReference type="Rhea" id="RHEA-COMP:10286"/>
        <dbReference type="Rhea" id="RHEA-COMP:10287"/>
        <dbReference type="ChEBI" id="CHEBI:15378"/>
        <dbReference type="ChEBI" id="CHEBI:57856"/>
        <dbReference type="ChEBI" id="CHEBI:59789"/>
        <dbReference type="ChEBI" id="CHEBI:74506"/>
        <dbReference type="ChEBI" id="CHEBI:82748"/>
        <dbReference type="EC" id="2.1.1.199"/>
    </reaction>
</comment>
<comment type="subcellular location">
    <subcellularLocation>
        <location evidence="1">Cytoplasm</location>
    </subcellularLocation>
</comment>
<comment type="similarity">
    <text evidence="2">Belongs to the methyltransferase superfamily. RsmH family.</text>
</comment>